<protein>
    <recommendedName>
        <fullName evidence="1">Probable endonuclease 4</fullName>
        <ecNumber evidence="1">3.1.21.2</ecNumber>
    </recommendedName>
    <alternativeName>
        <fullName evidence="1">Endodeoxyribonuclease IV</fullName>
    </alternativeName>
    <alternativeName>
        <fullName evidence="1">Endonuclease IV</fullName>
    </alternativeName>
</protein>
<feature type="chain" id="PRO_1000096912" description="Probable endonuclease 4">
    <location>
        <begin position="1"/>
        <end position="285"/>
    </location>
</feature>
<feature type="binding site" evidence="1">
    <location>
        <position position="69"/>
    </location>
    <ligand>
        <name>Zn(2+)</name>
        <dbReference type="ChEBI" id="CHEBI:29105"/>
        <label>1</label>
    </ligand>
</feature>
<feature type="binding site" evidence="1">
    <location>
        <position position="109"/>
    </location>
    <ligand>
        <name>Zn(2+)</name>
        <dbReference type="ChEBI" id="CHEBI:29105"/>
        <label>1</label>
    </ligand>
</feature>
<feature type="binding site" evidence="1">
    <location>
        <position position="145"/>
    </location>
    <ligand>
        <name>Zn(2+)</name>
        <dbReference type="ChEBI" id="CHEBI:29105"/>
        <label>1</label>
    </ligand>
</feature>
<feature type="binding site" evidence="1">
    <location>
        <position position="145"/>
    </location>
    <ligand>
        <name>Zn(2+)</name>
        <dbReference type="ChEBI" id="CHEBI:29105"/>
        <label>2</label>
    </ligand>
</feature>
<feature type="binding site" evidence="1">
    <location>
        <position position="179"/>
    </location>
    <ligand>
        <name>Zn(2+)</name>
        <dbReference type="ChEBI" id="CHEBI:29105"/>
        <label>2</label>
    </ligand>
</feature>
<feature type="binding site" evidence="1">
    <location>
        <position position="182"/>
    </location>
    <ligand>
        <name>Zn(2+)</name>
        <dbReference type="ChEBI" id="CHEBI:29105"/>
        <label>3</label>
    </ligand>
</feature>
<feature type="binding site" evidence="1">
    <location>
        <position position="216"/>
    </location>
    <ligand>
        <name>Zn(2+)</name>
        <dbReference type="ChEBI" id="CHEBI:29105"/>
        <label>2</label>
    </ligand>
</feature>
<feature type="binding site" evidence="1">
    <location>
        <position position="229"/>
    </location>
    <ligand>
        <name>Zn(2+)</name>
        <dbReference type="ChEBI" id="CHEBI:29105"/>
        <label>3</label>
    </ligand>
</feature>
<feature type="binding site" evidence="1">
    <location>
        <position position="231"/>
    </location>
    <ligand>
        <name>Zn(2+)</name>
        <dbReference type="ChEBI" id="CHEBI:29105"/>
        <label>3</label>
    </ligand>
</feature>
<feature type="binding site" evidence="1">
    <location>
        <position position="261"/>
    </location>
    <ligand>
        <name>Zn(2+)</name>
        <dbReference type="ChEBI" id="CHEBI:29105"/>
        <label>2</label>
    </ligand>
</feature>
<reference key="1">
    <citation type="journal article" date="2010" name="J. Bacteriol.">
        <title>Genome sequence of the deep-rooted Yersinia pestis strain Angola reveals new insights into the evolution and pangenome of the plague bacterium.</title>
        <authorList>
            <person name="Eppinger M."/>
            <person name="Worsham P.L."/>
            <person name="Nikolich M.P."/>
            <person name="Riley D.R."/>
            <person name="Sebastian Y."/>
            <person name="Mou S."/>
            <person name="Achtman M."/>
            <person name="Lindler L.E."/>
            <person name="Ravel J."/>
        </authorList>
    </citation>
    <scope>NUCLEOTIDE SEQUENCE [LARGE SCALE GENOMIC DNA]</scope>
    <source>
        <strain>Angola</strain>
    </source>
</reference>
<name>END4_YERPG</name>
<keyword id="KW-0227">DNA damage</keyword>
<keyword id="KW-0234">DNA repair</keyword>
<keyword id="KW-0255">Endonuclease</keyword>
<keyword id="KW-0378">Hydrolase</keyword>
<keyword id="KW-0479">Metal-binding</keyword>
<keyword id="KW-0540">Nuclease</keyword>
<keyword id="KW-0862">Zinc</keyword>
<sequence length="285" mass="31672">MKFVGAHVSAAGGVDQAVIRAHELEATAFALFTKNQRQWRAAPLAEDVIEKFKLACEKYGYTSAQILPHDSYLINLGHPVTEALEKSREAFIDELVRCQQLGLSLLNFHPGSHLLQIDEDQCLARIAESINIALDATEGVTAVIENTAGQGSNLGFKFEHLAAIIERVEDKSRVGVCIDTCHAFAAGYDLRTEEDCEHTFAALGKIVGFQYLRGMHLNDAKSEFNSRVDRHHSLGEGNIGKTVFSYIMRDSRFDNIPLILETVNMDIWAEEIAWLKSQAEIEPSL</sequence>
<gene>
    <name evidence="1" type="primary">nfo</name>
    <name type="ordered locus">YpAngola_A1532</name>
</gene>
<comment type="function">
    <text evidence="1">Endonuclease IV plays a role in DNA repair. It cleaves phosphodiester bonds at apurinic or apyrimidinic (AP) sites, generating a 3'-hydroxyl group and a 5'-terminal sugar phosphate.</text>
</comment>
<comment type="catalytic activity">
    <reaction evidence="1">
        <text>Endonucleolytic cleavage to 5'-phosphooligonucleotide end-products.</text>
        <dbReference type="EC" id="3.1.21.2"/>
    </reaction>
</comment>
<comment type="cofactor">
    <cofactor evidence="1">
        <name>Zn(2+)</name>
        <dbReference type="ChEBI" id="CHEBI:29105"/>
    </cofactor>
    <text evidence="1">Binds 3 Zn(2+) ions.</text>
</comment>
<comment type="similarity">
    <text evidence="1">Belongs to the AP endonuclease 2 family.</text>
</comment>
<evidence type="ECO:0000255" key="1">
    <source>
        <dbReference type="HAMAP-Rule" id="MF_00152"/>
    </source>
</evidence>
<dbReference type="EC" id="3.1.21.2" evidence="1"/>
<dbReference type="EMBL" id="CP000901">
    <property type="protein sequence ID" value="ABX85421.1"/>
    <property type="molecule type" value="Genomic_DNA"/>
</dbReference>
<dbReference type="RefSeq" id="WP_002208791.1">
    <property type="nucleotide sequence ID" value="NZ_CP009935.1"/>
</dbReference>
<dbReference type="SMR" id="A9R4S1"/>
<dbReference type="GeneID" id="57977438"/>
<dbReference type="KEGG" id="ypg:YpAngola_A1532"/>
<dbReference type="PATRIC" id="fig|349746.12.peg.2496"/>
<dbReference type="GO" id="GO:0008833">
    <property type="term" value="F:deoxyribonuclease IV (phage-T4-induced) activity"/>
    <property type="evidence" value="ECO:0007669"/>
    <property type="project" value="UniProtKB-UniRule"/>
</dbReference>
<dbReference type="GO" id="GO:0003677">
    <property type="term" value="F:DNA binding"/>
    <property type="evidence" value="ECO:0007669"/>
    <property type="project" value="InterPro"/>
</dbReference>
<dbReference type="GO" id="GO:0003906">
    <property type="term" value="F:DNA-(apurinic or apyrimidinic site) endonuclease activity"/>
    <property type="evidence" value="ECO:0007669"/>
    <property type="project" value="TreeGrafter"/>
</dbReference>
<dbReference type="GO" id="GO:0008081">
    <property type="term" value="F:phosphoric diester hydrolase activity"/>
    <property type="evidence" value="ECO:0007669"/>
    <property type="project" value="TreeGrafter"/>
</dbReference>
<dbReference type="GO" id="GO:0008270">
    <property type="term" value="F:zinc ion binding"/>
    <property type="evidence" value="ECO:0007669"/>
    <property type="project" value="UniProtKB-UniRule"/>
</dbReference>
<dbReference type="GO" id="GO:0006284">
    <property type="term" value="P:base-excision repair"/>
    <property type="evidence" value="ECO:0007669"/>
    <property type="project" value="TreeGrafter"/>
</dbReference>
<dbReference type="CDD" id="cd00019">
    <property type="entry name" value="AP2Ec"/>
    <property type="match status" value="1"/>
</dbReference>
<dbReference type="FunFam" id="3.20.20.150:FF:000001">
    <property type="entry name" value="Probable endonuclease 4"/>
    <property type="match status" value="1"/>
</dbReference>
<dbReference type="Gene3D" id="3.20.20.150">
    <property type="entry name" value="Divalent-metal-dependent TIM barrel enzymes"/>
    <property type="match status" value="1"/>
</dbReference>
<dbReference type="HAMAP" id="MF_00152">
    <property type="entry name" value="Nfo"/>
    <property type="match status" value="1"/>
</dbReference>
<dbReference type="InterPro" id="IPR001719">
    <property type="entry name" value="AP_endonuc_2"/>
</dbReference>
<dbReference type="InterPro" id="IPR018246">
    <property type="entry name" value="AP_endonuc_F2_Zn_BS"/>
</dbReference>
<dbReference type="InterPro" id="IPR036237">
    <property type="entry name" value="Xyl_isomerase-like_sf"/>
</dbReference>
<dbReference type="InterPro" id="IPR013022">
    <property type="entry name" value="Xyl_isomerase-like_TIM-brl"/>
</dbReference>
<dbReference type="NCBIfam" id="TIGR00587">
    <property type="entry name" value="nfo"/>
    <property type="match status" value="1"/>
</dbReference>
<dbReference type="NCBIfam" id="NF002199">
    <property type="entry name" value="PRK01060.1-4"/>
    <property type="match status" value="1"/>
</dbReference>
<dbReference type="PANTHER" id="PTHR21445:SF0">
    <property type="entry name" value="APURINIC-APYRIMIDINIC ENDONUCLEASE"/>
    <property type="match status" value="1"/>
</dbReference>
<dbReference type="PANTHER" id="PTHR21445">
    <property type="entry name" value="ENDONUCLEASE IV ENDODEOXYRIBONUCLEASE IV"/>
    <property type="match status" value="1"/>
</dbReference>
<dbReference type="Pfam" id="PF01261">
    <property type="entry name" value="AP_endonuc_2"/>
    <property type="match status" value="1"/>
</dbReference>
<dbReference type="SMART" id="SM00518">
    <property type="entry name" value="AP2Ec"/>
    <property type="match status" value="1"/>
</dbReference>
<dbReference type="SUPFAM" id="SSF51658">
    <property type="entry name" value="Xylose isomerase-like"/>
    <property type="match status" value="1"/>
</dbReference>
<dbReference type="PROSITE" id="PS00729">
    <property type="entry name" value="AP_NUCLEASE_F2_1"/>
    <property type="match status" value="1"/>
</dbReference>
<dbReference type="PROSITE" id="PS00730">
    <property type="entry name" value="AP_NUCLEASE_F2_2"/>
    <property type="match status" value="1"/>
</dbReference>
<dbReference type="PROSITE" id="PS00731">
    <property type="entry name" value="AP_NUCLEASE_F2_3"/>
    <property type="match status" value="1"/>
</dbReference>
<dbReference type="PROSITE" id="PS51432">
    <property type="entry name" value="AP_NUCLEASE_F2_4"/>
    <property type="match status" value="1"/>
</dbReference>
<organism>
    <name type="scientific">Yersinia pestis bv. Antiqua (strain Angola)</name>
    <dbReference type="NCBI Taxonomy" id="349746"/>
    <lineage>
        <taxon>Bacteria</taxon>
        <taxon>Pseudomonadati</taxon>
        <taxon>Pseudomonadota</taxon>
        <taxon>Gammaproteobacteria</taxon>
        <taxon>Enterobacterales</taxon>
        <taxon>Yersiniaceae</taxon>
        <taxon>Yersinia</taxon>
    </lineage>
</organism>
<accession>A9R4S1</accession>
<proteinExistence type="inferred from homology"/>